<gene>
    <name evidence="2" type="primary">nuoB1</name>
    <name type="ordered locus">azo1397</name>
</gene>
<comment type="function">
    <text evidence="1">NDH-1 shuttles electrons from NADH, via FMN and iron-sulfur (Fe-S) centers, to quinones in the respiratory chain. Couples the redox reaction to proton translocation (for every two electrons transferred, four hydrogen ions are translocated across the cytoplasmic membrane), and thus conserves the redox energy in a proton gradient (By similarity).</text>
</comment>
<comment type="catalytic activity">
    <reaction evidence="2">
        <text>a quinone + NADH + 5 H(+)(in) = a quinol + NAD(+) + 4 H(+)(out)</text>
        <dbReference type="Rhea" id="RHEA:57888"/>
        <dbReference type="ChEBI" id="CHEBI:15378"/>
        <dbReference type="ChEBI" id="CHEBI:24646"/>
        <dbReference type="ChEBI" id="CHEBI:57540"/>
        <dbReference type="ChEBI" id="CHEBI:57945"/>
        <dbReference type="ChEBI" id="CHEBI:132124"/>
    </reaction>
</comment>
<comment type="cofactor">
    <cofactor evidence="2">
        <name>[4Fe-4S] cluster</name>
        <dbReference type="ChEBI" id="CHEBI:49883"/>
    </cofactor>
    <text evidence="2">Binds 1 [4Fe-4S] cluster.</text>
</comment>
<comment type="subunit">
    <text evidence="2">NDH-1 is composed of 14 different subunits. Subunits NuoB, C, D, E, F, and G constitute the peripheral sector of the complex.</text>
</comment>
<comment type="subcellular location">
    <subcellularLocation>
        <location evidence="2">Cell inner membrane</location>
        <topology evidence="2">Peripheral membrane protein</topology>
        <orientation evidence="2">Cytoplasmic side</orientation>
    </subcellularLocation>
</comment>
<comment type="similarity">
    <text evidence="2">Belongs to the complex I 20 kDa subunit family.</text>
</comment>
<evidence type="ECO:0000250" key="1"/>
<evidence type="ECO:0000255" key="2">
    <source>
        <dbReference type="HAMAP-Rule" id="MF_01356"/>
    </source>
</evidence>
<dbReference type="EC" id="7.1.1.-" evidence="2"/>
<dbReference type="EMBL" id="AM406670">
    <property type="protein sequence ID" value="CAL94014.1"/>
    <property type="molecule type" value="Genomic_DNA"/>
</dbReference>
<dbReference type="RefSeq" id="WP_011765130.1">
    <property type="nucleotide sequence ID" value="NZ_CP016210.1"/>
</dbReference>
<dbReference type="SMR" id="A1K5A9"/>
<dbReference type="STRING" id="62928.azo1397"/>
<dbReference type="KEGG" id="aoa:dqs_1521"/>
<dbReference type="KEGG" id="azo:azo1397"/>
<dbReference type="eggNOG" id="COG0377">
    <property type="taxonomic scope" value="Bacteria"/>
</dbReference>
<dbReference type="HOGENOM" id="CLU_055737_7_3_4"/>
<dbReference type="OrthoDB" id="9786737at2"/>
<dbReference type="Proteomes" id="UP000002588">
    <property type="component" value="Chromosome"/>
</dbReference>
<dbReference type="GO" id="GO:0005886">
    <property type="term" value="C:plasma membrane"/>
    <property type="evidence" value="ECO:0007669"/>
    <property type="project" value="UniProtKB-SubCell"/>
</dbReference>
<dbReference type="GO" id="GO:0045271">
    <property type="term" value="C:respiratory chain complex I"/>
    <property type="evidence" value="ECO:0007669"/>
    <property type="project" value="TreeGrafter"/>
</dbReference>
<dbReference type="GO" id="GO:0051539">
    <property type="term" value="F:4 iron, 4 sulfur cluster binding"/>
    <property type="evidence" value="ECO:0007669"/>
    <property type="project" value="UniProtKB-KW"/>
</dbReference>
<dbReference type="GO" id="GO:0005506">
    <property type="term" value="F:iron ion binding"/>
    <property type="evidence" value="ECO:0007669"/>
    <property type="project" value="UniProtKB-UniRule"/>
</dbReference>
<dbReference type="GO" id="GO:0008137">
    <property type="term" value="F:NADH dehydrogenase (ubiquinone) activity"/>
    <property type="evidence" value="ECO:0007669"/>
    <property type="project" value="InterPro"/>
</dbReference>
<dbReference type="GO" id="GO:0050136">
    <property type="term" value="F:NADH:ubiquinone reductase (non-electrogenic) activity"/>
    <property type="evidence" value="ECO:0007669"/>
    <property type="project" value="UniProtKB-UniRule"/>
</dbReference>
<dbReference type="GO" id="GO:0048038">
    <property type="term" value="F:quinone binding"/>
    <property type="evidence" value="ECO:0007669"/>
    <property type="project" value="UniProtKB-KW"/>
</dbReference>
<dbReference type="GO" id="GO:0009060">
    <property type="term" value="P:aerobic respiration"/>
    <property type="evidence" value="ECO:0007669"/>
    <property type="project" value="TreeGrafter"/>
</dbReference>
<dbReference type="GO" id="GO:0015990">
    <property type="term" value="P:electron transport coupled proton transport"/>
    <property type="evidence" value="ECO:0007669"/>
    <property type="project" value="TreeGrafter"/>
</dbReference>
<dbReference type="FunFam" id="3.40.50.12280:FF:000001">
    <property type="entry name" value="NADH-quinone oxidoreductase subunit B 2"/>
    <property type="match status" value="1"/>
</dbReference>
<dbReference type="Gene3D" id="3.40.50.12280">
    <property type="match status" value="1"/>
</dbReference>
<dbReference type="HAMAP" id="MF_01356">
    <property type="entry name" value="NDH1_NuoB"/>
    <property type="match status" value="1"/>
</dbReference>
<dbReference type="InterPro" id="IPR006137">
    <property type="entry name" value="NADH_UbQ_OxRdtase-like_20kDa"/>
</dbReference>
<dbReference type="InterPro" id="IPR006138">
    <property type="entry name" value="NADH_UQ_OxRdtase_20Kd_su"/>
</dbReference>
<dbReference type="NCBIfam" id="TIGR01957">
    <property type="entry name" value="nuoB_fam"/>
    <property type="match status" value="1"/>
</dbReference>
<dbReference type="NCBIfam" id="NF005012">
    <property type="entry name" value="PRK06411.1"/>
    <property type="match status" value="1"/>
</dbReference>
<dbReference type="PANTHER" id="PTHR11995">
    <property type="entry name" value="NADH DEHYDROGENASE"/>
    <property type="match status" value="1"/>
</dbReference>
<dbReference type="PANTHER" id="PTHR11995:SF14">
    <property type="entry name" value="NADH DEHYDROGENASE [UBIQUINONE] IRON-SULFUR PROTEIN 7, MITOCHONDRIAL"/>
    <property type="match status" value="1"/>
</dbReference>
<dbReference type="Pfam" id="PF01058">
    <property type="entry name" value="Oxidored_q6"/>
    <property type="match status" value="1"/>
</dbReference>
<dbReference type="SUPFAM" id="SSF56770">
    <property type="entry name" value="HydA/Nqo6-like"/>
    <property type="match status" value="1"/>
</dbReference>
<dbReference type="PROSITE" id="PS01150">
    <property type="entry name" value="COMPLEX1_20K"/>
    <property type="match status" value="1"/>
</dbReference>
<reference key="1">
    <citation type="journal article" date="2006" name="Nat. Biotechnol.">
        <title>Complete genome of the mutualistic, N2-fixing grass endophyte Azoarcus sp. strain BH72.</title>
        <authorList>
            <person name="Krause A."/>
            <person name="Ramakumar A."/>
            <person name="Bartels D."/>
            <person name="Battistoni F."/>
            <person name="Bekel T."/>
            <person name="Boch J."/>
            <person name="Boehm M."/>
            <person name="Friedrich F."/>
            <person name="Hurek T."/>
            <person name="Krause L."/>
            <person name="Linke B."/>
            <person name="McHardy A.C."/>
            <person name="Sarkar A."/>
            <person name="Schneiker S."/>
            <person name="Syed A.A."/>
            <person name="Thauer R."/>
            <person name="Vorhoelter F.-J."/>
            <person name="Weidner S."/>
            <person name="Puehler A."/>
            <person name="Reinhold-Hurek B."/>
            <person name="Kaiser O."/>
            <person name="Goesmann A."/>
        </authorList>
    </citation>
    <scope>NUCLEOTIDE SEQUENCE [LARGE SCALE GENOMIC DNA]</scope>
    <source>
        <strain>BH72</strain>
    </source>
</reference>
<name>NUOB1_AZOSB</name>
<organism>
    <name type="scientific">Azoarcus sp. (strain BH72)</name>
    <dbReference type="NCBI Taxonomy" id="418699"/>
    <lineage>
        <taxon>Bacteria</taxon>
        <taxon>Pseudomonadati</taxon>
        <taxon>Pseudomonadota</taxon>
        <taxon>Betaproteobacteria</taxon>
        <taxon>Rhodocyclales</taxon>
        <taxon>Zoogloeaceae</taxon>
        <taxon>Azoarcus</taxon>
    </lineage>
</organism>
<sequence>MSIEGVFREGFVTTSLDAVINWTRTGSLWPMTFGLACCAVEMIHAGCSRYDLDRFGVVFRPSPRQSDLMIVAGTLCNKMAPALRKVYDQMAEPRWVISMGSCANGGGYYHYSYSVVRGCDRIVPVDVYVPGCPPTAEALLYGIIQLQNKIKRTNTIAR</sequence>
<accession>A1K5A9</accession>
<keyword id="KW-0004">4Fe-4S</keyword>
<keyword id="KW-0997">Cell inner membrane</keyword>
<keyword id="KW-1003">Cell membrane</keyword>
<keyword id="KW-0408">Iron</keyword>
<keyword id="KW-0411">Iron-sulfur</keyword>
<keyword id="KW-0472">Membrane</keyword>
<keyword id="KW-0479">Metal-binding</keyword>
<keyword id="KW-0520">NAD</keyword>
<keyword id="KW-0874">Quinone</keyword>
<keyword id="KW-1185">Reference proteome</keyword>
<keyword id="KW-1278">Translocase</keyword>
<keyword id="KW-0813">Transport</keyword>
<keyword id="KW-0830">Ubiquinone</keyword>
<protein>
    <recommendedName>
        <fullName evidence="2">NADH-quinone oxidoreductase subunit B 1</fullName>
        <ecNumber evidence="2">7.1.1.-</ecNumber>
    </recommendedName>
    <alternativeName>
        <fullName evidence="2">NADH dehydrogenase I subunit B 1</fullName>
    </alternativeName>
    <alternativeName>
        <fullName evidence="2">NDH-1 subunit B 1</fullName>
    </alternativeName>
</protein>
<proteinExistence type="inferred from homology"/>
<feature type="chain" id="PRO_0000358346" description="NADH-quinone oxidoreductase subunit B 1">
    <location>
        <begin position="1"/>
        <end position="158"/>
    </location>
</feature>
<feature type="binding site" evidence="2">
    <location>
        <position position="37"/>
    </location>
    <ligand>
        <name>[4Fe-4S] cluster</name>
        <dbReference type="ChEBI" id="CHEBI:49883"/>
    </ligand>
</feature>
<feature type="binding site" evidence="2">
    <location>
        <position position="38"/>
    </location>
    <ligand>
        <name>[4Fe-4S] cluster</name>
        <dbReference type="ChEBI" id="CHEBI:49883"/>
    </ligand>
</feature>
<feature type="binding site" evidence="2">
    <location>
        <position position="102"/>
    </location>
    <ligand>
        <name>[4Fe-4S] cluster</name>
        <dbReference type="ChEBI" id="CHEBI:49883"/>
    </ligand>
</feature>
<feature type="binding site" evidence="2">
    <location>
        <position position="132"/>
    </location>
    <ligand>
        <name>[4Fe-4S] cluster</name>
        <dbReference type="ChEBI" id="CHEBI:49883"/>
    </ligand>
</feature>